<feature type="chain" id="PRO_0000376847" description="UPF0750 membrane protein YxkD">
    <location>
        <begin position="1"/>
        <end position="278"/>
    </location>
</feature>
<feature type="transmembrane region" description="Helical" evidence="1">
    <location>
        <begin position="8"/>
        <end position="28"/>
    </location>
</feature>
<feature type="transmembrane region" description="Helical" evidence="1">
    <location>
        <begin position="46"/>
        <end position="66"/>
    </location>
</feature>
<feature type="transmembrane region" description="Helical" evidence="1">
    <location>
        <begin position="77"/>
        <end position="97"/>
    </location>
</feature>
<feature type="transmembrane region" description="Helical" evidence="1">
    <location>
        <begin position="101"/>
        <end position="121"/>
    </location>
</feature>
<feature type="transmembrane region" description="Helical" evidence="1">
    <location>
        <begin position="145"/>
        <end position="165"/>
    </location>
</feature>
<gene>
    <name type="primary">yxkD</name>
    <name type="ordered locus">BSU38840</name>
</gene>
<organism>
    <name type="scientific">Bacillus subtilis (strain 168)</name>
    <dbReference type="NCBI Taxonomy" id="224308"/>
    <lineage>
        <taxon>Bacteria</taxon>
        <taxon>Bacillati</taxon>
        <taxon>Bacillota</taxon>
        <taxon>Bacilli</taxon>
        <taxon>Bacillales</taxon>
        <taxon>Bacillaceae</taxon>
        <taxon>Bacillus</taxon>
    </lineage>
</organism>
<keyword id="KW-1003">Cell membrane</keyword>
<keyword id="KW-0472">Membrane</keyword>
<keyword id="KW-1185">Reference proteome</keyword>
<keyword id="KW-0812">Transmembrane</keyword>
<keyword id="KW-1133">Transmembrane helix</keyword>
<protein>
    <recommendedName>
        <fullName>UPF0750 membrane protein YxkD</fullName>
    </recommendedName>
</protein>
<comment type="subcellular location">
    <subcellularLocation>
        <location evidence="2">Cell membrane</location>
        <topology evidence="2">Multi-pass membrane protein</topology>
    </subcellularLocation>
</comment>
<comment type="similarity">
    <text evidence="2">Belongs to the UPF0750 family.</text>
</comment>
<proteinExistence type="inferred from homology"/>
<reference key="1">
    <citation type="journal article" date="1996" name="Microbiology">
        <title>Sequencing of a 65 kb region of the Bacillus subtilis genome containing the lic and cel loci, and creation of a 177 kb contig covering the gnt-sacXY region.</title>
        <authorList>
            <person name="Yoshida K."/>
            <person name="Shindo K."/>
            <person name="Sano H."/>
            <person name="Seki S."/>
            <person name="Fujimura M."/>
            <person name="Yanai N."/>
            <person name="Miwa Y."/>
            <person name="Fujita Y."/>
        </authorList>
    </citation>
    <scope>NUCLEOTIDE SEQUENCE [GENOMIC DNA]</scope>
    <source>
        <strain>168 / BGSC1A1</strain>
    </source>
</reference>
<reference key="2">
    <citation type="journal article" date="1997" name="Nature">
        <title>The complete genome sequence of the Gram-positive bacterium Bacillus subtilis.</title>
        <authorList>
            <person name="Kunst F."/>
            <person name="Ogasawara N."/>
            <person name="Moszer I."/>
            <person name="Albertini A.M."/>
            <person name="Alloni G."/>
            <person name="Azevedo V."/>
            <person name="Bertero M.G."/>
            <person name="Bessieres P."/>
            <person name="Bolotin A."/>
            <person name="Borchert S."/>
            <person name="Borriss R."/>
            <person name="Boursier L."/>
            <person name="Brans A."/>
            <person name="Braun M."/>
            <person name="Brignell S.C."/>
            <person name="Bron S."/>
            <person name="Brouillet S."/>
            <person name="Bruschi C.V."/>
            <person name="Caldwell B."/>
            <person name="Capuano V."/>
            <person name="Carter N.M."/>
            <person name="Choi S.-K."/>
            <person name="Codani J.-J."/>
            <person name="Connerton I.F."/>
            <person name="Cummings N.J."/>
            <person name="Daniel R.A."/>
            <person name="Denizot F."/>
            <person name="Devine K.M."/>
            <person name="Duesterhoeft A."/>
            <person name="Ehrlich S.D."/>
            <person name="Emmerson P.T."/>
            <person name="Entian K.-D."/>
            <person name="Errington J."/>
            <person name="Fabret C."/>
            <person name="Ferrari E."/>
            <person name="Foulger D."/>
            <person name="Fritz C."/>
            <person name="Fujita M."/>
            <person name="Fujita Y."/>
            <person name="Fuma S."/>
            <person name="Galizzi A."/>
            <person name="Galleron N."/>
            <person name="Ghim S.-Y."/>
            <person name="Glaser P."/>
            <person name="Goffeau A."/>
            <person name="Golightly E.J."/>
            <person name="Grandi G."/>
            <person name="Guiseppi G."/>
            <person name="Guy B.J."/>
            <person name="Haga K."/>
            <person name="Haiech J."/>
            <person name="Harwood C.R."/>
            <person name="Henaut A."/>
            <person name="Hilbert H."/>
            <person name="Holsappel S."/>
            <person name="Hosono S."/>
            <person name="Hullo M.-F."/>
            <person name="Itaya M."/>
            <person name="Jones L.-M."/>
            <person name="Joris B."/>
            <person name="Karamata D."/>
            <person name="Kasahara Y."/>
            <person name="Klaerr-Blanchard M."/>
            <person name="Klein C."/>
            <person name="Kobayashi Y."/>
            <person name="Koetter P."/>
            <person name="Koningstein G."/>
            <person name="Krogh S."/>
            <person name="Kumano M."/>
            <person name="Kurita K."/>
            <person name="Lapidus A."/>
            <person name="Lardinois S."/>
            <person name="Lauber J."/>
            <person name="Lazarevic V."/>
            <person name="Lee S.-M."/>
            <person name="Levine A."/>
            <person name="Liu H."/>
            <person name="Masuda S."/>
            <person name="Mauel C."/>
            <person name="Medigue C."/>
            <person name="Medina N."/>
            <person name="Mellado R.P."/>
            <person name="Mizuno M."/>
            <person name="Moestl D."/>
            <person name="Nakai S."/>
            <person name="Noback M."/>
            <person name="Noone D."/>
            <person name="O'Reilly M."/>
            <person name="Ogawa K."/>
            <person name="Ogiwara A."/>
            <person name="Oudega B."/>
            <person name="Park S.-H."/>
            <person name="Parro V."/>
            <person name="Pohl T.M."/>
            <person name="Portetelle D."/>
            <person name="Porwollik S."/>
            <person name="Prescott A.M."/>
            <person name="Presecan E."/>
            <person name="Pujic P."/>
            <person name="Purnelle B."/>
            <person name="Rapoport G."/>
            <person name="Rey M."/>
            <person name="Reynolds S."/>
            <person name="Rieger M."/>
            <person name="Rivolta C."/>
            <person name="Rocha E."/>
            <person name="Roche B."/>
            <person name="Rose M."/>
            <person name="Sadaie Y."/>
            <person name="Sato T."/>
            <person name="Scanlan E."/>
            <person name="Schleich S."/>
            <person name="Schroeter R."/>
            <person name="Scoffone F."/>
            <person name="Sekiguchi J."/>
            <person name="Sekowska A."/>
            <person name="Seror S.J."/>
            <person name="Serror P."/>
            <person name="Shin B.-S."/>
            <person name="Soldo B."/>
            <person name="Sorokin A."/>
            <person name="Tacconi E."/>
            <person name="Takagi T."/>
            <person name="Takahashi H."/>
            <person name="Takemaru K."/>
            <person name="Takeuchi M."/>
            <person name="Tamakoshi A."/>
            <person name="Tanaka T."/>
            <person name="Terpstra P."/>
            <person name="Tognoni A."/>
            <person name="Tosato V."/>
            <person name="Uchiyama S."/>
            <person name="Vandenbol M."/>
            <person name="Vannier F."/>
            <person name="Vassarotti A."/>
            <person name="Viari A."/>
            <person name="Wambutt R."/>
            <person name="Wedler E."/>
            <person name="Wedler H."/>
            <person name="Weitzenegger T."/>
            <person name="Winters P."/>
            <person name="Wipat A."/>
            <person name="Yamamoto H."/>
            <person name="Yamane K."/>
            <person name="Yasumoto K."/>
            <person name="Yata K."/>
            <person name="Yoshida K."/>
            <person name="Yoshikawa H.-F."/>
            <person name="Zumstein E."/>
            <person name="Yoshikawa H."/>
            <person name="Danchin A."/>
        </authorList>
    </citation>
    <scope>NUCLEOTIDE SEQUENCE [LARGE SCALE GENOMIC DNA]</scope>
    <source>
        <strain>168</strain>
    </source>
</reference>
<evidence type="ECO:0000255" key="1"/>
<evidence type="ECO:0000305" key="2"/>
<sequence>MKKRMLDVLMLVIGAFFFALAVNLFAIPNDLGEGGVTGITLILYYLFQWSPGVTNFILNAFLLLIGYKFLDGKTTVYTIIAVAANSLFLHLTHGWSIPSDELIINTIFAGVFAGVGIGMIIRVGGTTAGSAILARIANKYLDWNISYALLFFDLIVVFSSYFIIGAEKMMFTIVMLYIGTKVMDFIIEGLNTKKAITVISENKSEIAEQVNTLMDRGVTILSGKGNYTGQSKEILYIVINKQELSMLKKIIRSCDKKAFVIVHDVRDVFGEGFVDISK</sequence>
<name>YXKD_BACSU</name>
<dbReference type="EMBL" id="D83026">
    <property type="protein sequence ID" value="BAA11720.1"/>
    <property type="molecule type" value="Genomic_DNA"/>
</dbReference>
<dbReference type="EMBL" id="AL009126">
    <property type="protein sequence ID" value="CAB15910.1"/>
    <property type="molecule type" value="Genomic_DNA"/>
</dbReference>
<dbReference type="PIR" id="G70080">
    <property type="entry name" value="G70080"/>
</dbReference>
<dbReference type="RefSeq" id="WP_003242615.1">
    <property type="nucleotide sequence ID" value="NZ_OZ025638.1"/>
</dbReference>
<dbReference type="SMR" id="P94357"/>
<dbReference type="FunCoup" id="P94357">
    <property type="interactions" value="125"/>
</dbReference>
<dbReference type="STRING" id="224308.BSU38840"/>
<dbReference type="TCDB" id="2.A.115.1.2">
    <property type="family name" value="the novobiocin exporter (nbce) family"/>
</dbReference>
<dbReference type="PaxDb" id="224308-BSU38840"/>
<dbReference type="EnsemblBacteria" id="CAB15910">
    <property type="protein sequence ID" value="CAB15910"/>
    <property type="gene ID" value="BSU_38840"/>
</dbReference>
<dbReference type="GeneID" id="937425"/>
<dbReference type="KEGG" id="bsu:BSU38840"/>
<dbReference type="PATRIC" id="fig|224308.179.peg.4203"/>
<dbReference type="eggNOG" id="COG1284">
    <property type="taxonomic scope" value="Bacteria"/>
</dbReference>
<dbReference type="InParanoid" id="P94357"/>
<dbReference type="OrthoDB" id="1758221at2"/>
<dbReference type="PhylomeDB" id="P94357"/>
<dbReference type="BioCyc" id="BSUB:BSU38840-MONOMER"/>
<dbReference type="Proteomes" id="UP000001570">
    <property type="component" value="Chromosome"/>
</dbReference>
<dbReference type="GO" id="GO:0005886">
    <property type="term" value="C:plasma membrane"/>
    <property type="evidence" value="ECO:0007669"/>
    <property type="project" value="UniProtKB-SubCell"/>
</dbReference>
<dbReference type="CDD" id="cd16380">
    <property type="entry name" value="YitT_C"/>
    <property type="match status" value="1"/>
</dbReference>
<dbReference type="Gene3D" id="3.30.70.120">
    <property type="match status" value="1"/>
</dbReference>
<dbReference type="InterPro" id="IPR019264">
    <property type="entry name" value="DUF2179"/>
</dbReference>
<dbReference type="InterPro" id="IPR015867">
    <property type="entry name" value="N-reg_PII/ATP_PRibTrfase_C"/>
</dbReference>
<dbReference type="InterPro" id="IPR051461">
    <property type="entry name" value="UPF0750_membrane"/>
</dbReference>
<dbReference type="InterPro" id="IPR003740">
    <property type="entry name" value="YitT"/>
</dbReference>
<dbReference type="PANTHER" id="PTHR33545">
    <property type="entry name" value="UPF0750 MEMBRANE PROTEIN YITT-RELATED"/>
    <property type="match status" value="1"/>
</dbReference>
<dbReference type="PANTHER" id="PTHR33545:SF4">
    <property type="entry name" value="UPF0750 MEMBRANE PROTEIN YXKD"/>
    <property type="match status" value="1"/>
</dbReference>
<dbReference type="Pfam" id="PF10035">
    <property type="entry name" value="DUF2179"/>
    <property type="match status" value="1"/>
</dbReference>
<dbReference type="Pfam" id="PF02588">
    <property type="entry name" value="YitT_membrane"/>
    <property type="match status" value="1"/>
</dbReference>
<dbReference type="PIRSF" id="PIRSF006483">
    <property type="entry name" value="Membrane_protein_YitT"/>
    <property type="match status" value="1"/>
</dbReference>
<accession>P94357</accession>
<accession>Q794X6</accession>